<keyword id="KW-0008">Acetylcholine receptor inhibiting toxin</keyword>
<keyword id="KW-1015">Disulfide bond</keyword>
<keyword id="KW-0872">Ion channel impairing toxin</keyword>
<keyword id="KW-0528">Neurotoxin</keyword>
<keyword id="KW-0629">Postsynaptic neurotoxin</keyword>
<keyword id="KW-0964">Secreted</keyword>
<keyword id="KW-0732">Signal</keyword>
<keyword id="KW-0800">Toxin</keyword>
<sequence length="92" mass="10224">MKTLLLTLVVVTIVCLDLGDSLICYQAYNTPQTCAPGENLCYTKTWCDYWCHVKGKRIDLGCAATCPTAKPGEDVTCCSRDKCNPHPLQRPR</sequence>
<dbReference type="EMBL" id="FJ752459">
    <property type="protein sequence ID" value="ACR78481.1"/>
    <property type="molecule type" value="mRNA"/>
</dbReference>
<dbReference type="SMR" id="F8J2E1"/>
<dbReference type="GO" id="GO:0005576">
    <property type="term" value="C:extracellular region"/>
    <property type="evidence" value="ECO:0007669"/>
    <property type="project" value="UniProtKB-SubCell"/>
</dbReference>
<dbReference type="GO" id="GO:0030550">
    <property type="term" value="F:acetylcholine receptor inhibitor activity"/>
    <property type="evidence" value="ECO:0007669"/>
    <property type="project" value="UniProtKB-KW"/>
</dbReference>
<dbReference type="GO" id="GO:0099106">
    <property type="term" value="F:ion channel regulator activity"/>
    <property type="evidence" value="ECO:0007669"/>
    <property type="project" value="UniProtKB-KW"/>
</dbReference>
<dbReference type="GO" id="GO:0090729">
    <property type="term" value="F:toxin activity"/>
    <property type="evidence" value="ECO:0007669"/>
    <property type="project" value="UniProtKB-KW"/>
</dbReference>
<dbReference type="CDD" id="cd00206">
    <property type="entry name" value="TFP_snake_toxin"/>
    <property type="match status" value="1"/>
</dbReference>
<dbReference type="Gene3D" id="2.10.60.10">
    <property type="entry name" value="CD59"/>
    <property type="match status" value="1"/>
</dbReference>
<dbReference type="InterPro" id="IPR003571">
    <property type="entry name" value="Snake_3FTx"/>
</dbReference>
<dbReference type="InterPro" id="IPR045860">
    <property type="entry name" value="Snake_toxin-like_sf"/>
</dbReference>
<dbReference type="InterPro" id="IPR018354">
    <property type="entry name" value="Snake_toxin_con_site"/>
</dbReference>
<dbReference type="InterPro" id="IPR054131">
    <property type="entry name" value="Toxin_cobra-type"/>
</dbReference>
<dbReference type="Pfam" id="PF21947">
    <property type="entry name" value="Toxin_cobra-type"/>
    <property type="match status" value="1"/>
</dbReference>
<dbReference type="SUPFAM" id="SSF57302">
    <property type="entry name" value="Snake toxin-like"/>
    <property type="match status" value="1"/>
</dbReference>
<dbReference type="PROSITE" id="PS00272">
    <property type="entry name" value="SNAKE_TOXIN"/>
    <property type="match status" value="1"/>
</dbReference>
<organism>
    <name type="scientific">Drysdalia coronoides</name>
    <name type="common">White-lipped snake</name>
    <name type="synonym">Hoplocephalus coronoides</name>
    <dbReference type="NCBI Taxonomy" id="66186"/>
    <lineage>
        <taxon>Eukaryota</taxon>
        <taxon>Metazoa</taxon>
        <taxon>Chordata</taxon>
        <taxon>Craniata</taxon>
        <taxon>Vertebrata</taxon>
        <taxon>Euteleostomi</taxon>
        <taxon>Lepidosauria</taxon>
        <taxon>Squamata</taxon>
        <taxon>Bifurcata</taxon>
        <taxon>Unidentata</taxon>
        <taxon>Episquamata</taxon>
        <taxon>Toxicofera</taxon>
        <taxon>Serpentes</taxon>
        <taxon>Colubroidea</taxon>
        <taxon>Elapidae</taxon>
        <taxon>Notechinae</taxon>
        <taxon>Drysdalia</taxon>
    </lineage>
</organism>
<reference key="1">
    <citation type="journal article" date="2011" name="J. Proteome Res.">
        <title>Identification of novel proteins from the venom of a cryptic snake Drysdalia coronoides by a combined transcriptomics and proteomics approach.</title>
        <authorList>
            <person name="Chatrath S.T."/>
            <person name="Chapeaurouge A."/>
            <person name="Lin Q."/>
            <person name="Lim T.K."/>
            <person name="Dunstan N."/>
            <person name="Mirtschin P."/>
            <person name="Kumar P.P."/>
            <person name="Kini R.M."/>
        </authorList>
    </citation>
    <scope>NUCLEOTIDE SEQUENCE [MRNA]</scope>
    <scope>IDENTIFICATION BY MASS SPECTROMETRY</scope>
    <scope>SUBCELLULAR LOCATION</scope>
    <source>
        <tissue>Venom</tissue>
        <tissue>Venom gland</tissue>
    </source>
</reference>
<evidence type="ECO:0000250" key="1"/>
<evidence type="ECO:0000250" key="2">
    <source>
        <dbReference type="UniProtKB" id="P60615"/>
    </source>
</evidence>
<evidence type="ECO:0000269" key="3">
    <source>
    </source>
</evidence>
<evidence type="ECO:0000305" key="4"/>
<proteinExistence type="evidence at protein level"/>
<name>3L273_DRYCN</name>
<comment type="function">
    <text evidence="2">Binds with high affinity to muscular (alpha-1/CHRNA1) and neuronal (alpha-7/CHRNA7) nicotinic acetylcholine receptor (nAChR) and inhibits acetylcholine from binding to the receptor, thereby impairing neuromuscular and neuronal transmission.</text>
</comment>
<comment type="subcellular location">
    <subcellularLocation>
        <location evidence="3">Secreted</location>
    </subcellularLocation>
</comment>
<comment type="tissue specificity">
    <text evidence="4">Expressed by the venom gland.</text>
</comment>
<comment type="similarity">
    <text evidence="4">Belongs to the three-finger toxin family. Long-chain subfamily. Type II alpha-neurotoxin sub-subfamily.</text>
</comment>
<protein>
    <recommendedName>
        <fullName>Long neurotoxin 73</fullName>
        <shortName>LNTX-73</shortName>
    </recommendedName>
</protein>
<feature type="signal peptide" evidence="1">
    <location>
        <begin position="1"/>
        <end position="21"/>
    </location>
</feature>
<feature type="chain" id="PRO_0000425524" description="Long neurotoxin 73">
    <location>
        <begin position="22"/>
        <end position="92"/>
    </location>
</feature>
<feature type="disulfide bond" evidence="1">
    <location>
        <begin position="24"/>
        <end position="41"/>
    </location>
</feature>
<feature type="disulfide bond" evidence="1">
    <location>
        <begin position="34"/>
        <end position="62"/>
    </location>
</feature>
<feature type="disulfide bond" evidence="1">
    <location>
        <begin position="47"/>
        <end position="51"/>
    </location>
</feature>
<feature type="disulfide bond" evidence="1">
    <location>
        <begin position="66"/>
        <end position="77"/>
    </location>
</feature>
<feature type="disulfide bond" evidence="1">
    <location>
        <begin position="78"/>
        <end position="83"/>
    </location>
</feature>
<accession>F8J2E1</accession>